<protein>
    <recommendedName>
        <fullName evidence="1">Large ribosomal subunit protein bL35</fullName>
    </recommendedName>
    <alternativeName>
        <fullName evidence="2">50S ribosomal protein L35</fullName>
    </alternativeName>
</protein>
<proteinExistence type="inferred from homology"/>
<evidence type="ECO:0000255" key="1">
    <source>
        <dbReference type="HAMAP-Rule" id="MF_00514"/>
    </source>
</evidence>
<evidence type="ECO:0000305" key="2"/>
<dbReference type="EMBL" id="AY014398">
    <property type="protein sequence ID" value="AAK02072.1"/>
    <property type="molecule type" value="Genomic_DNA"/>
</dbReference>
<dbReference type="RefSeq" id="WP_004397162.1">
    <property type="nucleotide sequence ID" value="NZ_UHIS01000005.1"/>
</dbReference>
<dbReference type="SMR" id="Q9ALJ2"/>
<dbReference type="GeneID" id="79889618"/>
<dbReference type="OrthoDB" id="47476at2"/>
<dbReference type="GO" id="GO:0022625">
    <property type="term" value="C:cytosolic large ribosomal subunit"/>
    <property type="evidence" value="ECO:0007669"/>
    <property type="project" value="TreeGrafter"/>
</dbReference>
<dbReference type="GO" id="GO:0003735">
    <property type="term" value="F:structural constituent of ribosome"/>
    <property type="evidence" value="ECO:0007669"/>
    <property type="project" value="InterPro"/>
</dbReference>
<dbReference type="GO" id="GO:0006412">
    <property type="term" value="P:translation"/>
    <property type="evidence" value="ECO:0007669"/>
    <property type="project" value="UniProtKB-UniRule"/>
</dbReference>
<dbReference type="FunFam" id="4.10.410.60:FF:000001">
    <property type="entry name" value="50S ribosomal protein L35"/>
    <property type="match status" value="1"/>
</dbReference>
<dbReference type="Gene3D" id="4.10.410.60">
    <property type="match status" value="1"/>
</dbReference>
<dbReference type="HAMAP" id="MF_00514">
    <property type="entry name" value="Ribosomal_bL35"/>
    <property type="match status" value="1"/>
</dbReference>
<dbReference type="InterPro" id="IPR001706">
    <property type="entry name" value="Ribosomal_bL35"/>
</dbReference>
<dbReference type="InterPro" id="IPR021137">
    <property type="entry name" value="Ribosomal_bL35-like"/>
</dbReference>
<dbReference type="InterPro" id="IPR018265">
    <property type="entry name" value="Ribosomal_bL35_CS"/>
</dbReference>
<dbReference type="InterPro" id="IPR037229">
    <property type="entry name" value="Ribosomal_bL35_sf"/>
</dbReference>
<dbReference type="NCBIfam" id="TIGR00001">
    <property type="entry name" value="rpmI_bact"/>
    <property type="match status" value="1"/>
</dbReference>
<dbReference type="PANTHER" id="PTHR33343">
    <property type="entry name" value="54S RIBOSOMAL PROTEIN BL35M"/>
    <property type="match status" value="1"/>
</dbReference>
<dbReference type="PANTHER" id="PTHR33343:SF1">
    <property type="entry name" value="LARGE RIBOSOMAL SUBUNIT PROTEIN BL35M"/>
    <property type="match status" value="1"/>
</dbReference>
<dbReference type="Pfam" id="PF01632">
    <property type="entry name" value="Ribosomal_L35p"/>
    <property type="match status" value="1"/>
</dbReference>
<dbReference type="PRINTS" id="PR00064">
    <property type="entry name" value="RIBOSOMALL35"/>
</dbReference>
<dbReference type="SUPFAM" id="SSF143034">
    <property type="entry name" value="L35p-like"/>
    <property type="match status" value="1"/>
</dbReference>
<dbReference type="PROSITE" id="PS00936">
    <property type="entry name" value="RIBOSOMAL_L35"/>
    <property type="match status" value="1"/>
</dbReference>
<reference key="1">
    <citation type="journal article" date="2001" name="Proc. Natl. Acad. Sci. U.S.A.">
        <title>The evolutionary history of chromosomal super-integrons provides an ancestry for multi-resistant integrons.</title>
        <authorList>
            <person name="Rowe-Magnus D.A."/>
            <person name="Guerout A.-M."/>
            <person name="Ploncard P."/>
            <person name="Dychinco B."/>
            <person name="Davies J."/>
            <person name="Mazel D."/>
        </authorList>
    </citation>
    <scope>NUCLEOTIDE SEQUENCE [GENOMIC DNA]</scope>
    <source>
        <strain>CIP A267</strain>
    </source>
</reference>
<accession>Q9ALJ2</accession>
<keyword id="KW-0687">Ribonucleoprotein</keyword>
<keyword id="KW-0689">Ribosomal protein</keyword>
<sequence length="64" mass="7324">MPKMKTNKGAAKRFKKTAGGIKYKHATKRHILTKRTTKNKRQLRPNSILPKCEVAGVMRMLPYA</sequence>
<comment type="similarity">
    <text evidence="1">Belongs to the bacterial ribosomal protein bL35 family.</text>
</comment>
<gene>
    <name evidence="1" type="primary">rpmI</name>
</gene>
<organism>
    <name type="scientific">Vibrio metschnikovii</name>
    <dbReference type="NCBI Taxonomy" id="28172"/>
    <lineage>
        <taxon>Bacteria</taxon>
        <taxon>Pseudomonadati</taxon>
        <taxon>Pseudomonadota</taxon>
        <taxon>Gammaproteobacteria</taxon>
        <taxon>Vibrionales</taxon>
        <taxon>Vibrionaceae</taxon>
        <taxon>Vibrio</taxon>
    </lineage>
</organism>
<feature type="chain" id="PRO_0000177452" description="Large ribosomal subunit protein bL35">
    <location>
        <begin position="1"/>
        <end position="64"/>
    </location>
</feature>
<name>RL35_VIBME</name>